<feature type="chain" id="PRO_0000430163" description="Probable transcriptional regulator SLK1">
    <location>
        <begin position="1"/>
        <end position="748"/>
    </location>
</feature>
<feature type="region of interest" description="Disordered" evidence="3">
    <location>
        <begin position="67"/>
        <end position="93"/>
    </location>
</feature>
<feature type="region of interest" description="Disordered" evidence="3">
    <location>
        <begin position="138"/>
        <end position="163"/>
    </location>
</feature>
<feature type="region of interest" description="Dimerization" evidence="1">
    <location>
        <begin position="204"/>
        <end position="451"/>
    </location>
</feature>
<feature type="region of interest" description="Disordered" evidence="3">
    <location>
        <begin position="572"/>
        <end position="653"/>
    </location>
</feature>
<feature type="region of interest" description="Disordered" evidence="3">
    <location>
        <begin position="667"/>
        <end position="712"/>
    </location>
</feature>
<feature type="short sequence motif" description="Nuclear localization signal" evidence="2">
    <location>
        <begin position="213"/>
        <end position="227"/>
    </location>
</feature>
<feature type="compositionally biased region" description="Low complexity" evidence="3">
    <location>
        <begin position="71"/>
        <end position="81"/>
    </location>
</feature>
<feature type="compositionally biased region" description="Polar residues" evidence="3">
    <location>
        <begin position="572"/>
        <end position="587"/>
    </location>
</feature>
<feature type="compositionally biased region" description="Low complexity" evidence="3">
    <location>
        <begin position="588"/>
        <end position="606"/>
    </location>
</feature>
<feature type="compositionally biased region" description="Polar residues" evidence="3">
    <location>
        <begin position="615"/>
        <end position="653"/>
    </location>
</feature>
<feature type="compositionally biased region" description="Low complexity" evidence="3">
    <location>
        <begin position="667"/>
        <end position="686"/>
    </location>
</feature>
<feature type="compositionally biased region" description="Polar residues" evidence="3">
    <location>
        <begin position="687"/>
        <end position="699"/>
    </location>
</feature>
<feature type="sequence conflict" description="In Ref. 1; CAA18174/CAB81362 and 3; AAS99724." evidence="6" ref="1 3">
    <original>N</original>
    <variation>S</variation>
    <location>
        <position position="93"/>
    </location>
</feature>
<feature type="sequence conflict" description="In Ref. 1; CAB81362." evidence="6" ref="1">
    <original>M</original>
    <variation>R</variation>
    <location>
        <position position="394"/>
    </location>
</feature>
<accession>Q0WVM7</accession>
<accession>O65609</accession>
<accession>Q9M0K8</accession>
<reference key="1">
    <citation type="journal article" date="1999" name="Nature">
        <title>Sequence and analysis of chromosome 4 of the plant Arabidopsis thaliana.</title>
        <authorList>
            <person name="Mayer K.F.X."/>
            <person name="Schueller C."/>
            <person name="Wambutt R."/>
            <person name="Murphy G."/>
            <person name="Volckaert G."/>
            <person name="Pohl T."/>
            <person name="Duesterhoeft A."/>
            <person name="Stiekema W."/>
            <person name="Entian K.-D."/>
            <person name="Terryn N."/>
            <person name="Harris B."/>
            <person name="Ansorge W."/>
            <person name="Brandt P."/>
            <person name="Grivell L.A."/>
            <person name="Rieger M."/>
            <person name="Weichselgartner M."/>
            <person name="de Simone V."/>
            <person name="Obermaier B."/>
            <person name="Mache R."/>
            <person name="Mueller M."/>
            <person name="Kreis M."/>
            <person name="Delseny M."/>
            <person name="Puigdomenech P."/>
            <person name="Watson M."/>
            <person name="Schmidtheini T."/>
            <person name="Reichert B."/>
            <person name="Portetelle D."/>
            <person name="Perez-Alonso M."/>
            <person name="Boutry M."/>
            <person name="Bancroft I."/>
            <person name="Vos P."/>
            <person name="Hoheisel J."/>
            <person name="Zimmermann W."/>
            <person name="Wedler H."/>
            <person name="Ridley P."/>
            <person name="Langham S.-A."/>
            <person name="McCullagh B."/>
            <person name="Bilham L."/>
            <person name="Robben J."/>
            <person name="van der Schueren J."/>
            <person name="Grymonprez B."/>
            <person name="Chuang Y.-J."/>
            <person name="Vandenbussche F."/>
            <person name="Braeken M."/>
            <person name="Weltjens I."/>
            <person name="Voet M."/>
            <person name="Bastiaens I."/>
            <person name="Aert R."/>
            <person name="Defoor E."/>
            <person name="Weitzenegger T."/>
            <person name="Bothe G."/>
            <person name="Ramsperger U."/>
            <person name="Hilbert H."/>
            <person name="Braun M."/>
            <person name="Holzer E."/>
            <person name="Brandt A."/>
            <person name="Peters S."/>
            <person name="van Staveren M."/>
            <person name="Dirkse W."/>
            <person name="Mooijman P."/>
            <person name="Klein Lankhorst R."/>
            <person name="Rose M."/>
            <person name="Hauf J."/>
            <person name="Koetter P."/>
            <person name="Berneiser S."/>
            <person name="Hempel S."/>
            <person name="Feldpausch M."/>
            <person name="Lamberth S."/>
            <person name="Van den Daele H."/>
            <person name="De Keyser A."/>
            <person name="Buysshaert C."/>
            <person name="Gielen J."/>
            <person name="Villarroel R."/>
            <person name="De Clercq R."/>
            <person name="van Montagu M."/>
            <person name="Rogers J."/>
            <person name="Cronin A."/>
            <person name="Quail M.A."/>
            <person name="Bray-Allen S."/>
            <person name="Clark L."/>
            <person name="Doggett J."/>
            <person name="Hall S."/>
            <person name="Kay M."/>
            <person name="Lennard N."/>
            <person name="McLay K."/>
            <person name="Mayes R."/>
            <person name="Pettett A."/>
            <person name="Rajandream M.A."/>
            <person name="Lyne M."/>
            <person name="Benes V."/>
            <person name="Rechmann S."/>
            <person name="Borkova D."/>
            <person name="Bloecker H."/>
            <person name="Scharfe M."/>
            <person name="Grimm M."/>
            <person name="Loehnert T.-H."/>
            <person name="Dose S."/>
            <person name="de Haan M."/>
            <person name="Maarse A.C."/>
            <person name="Schaefer M."/>
            <person name="Mueller-Auer S."/>
            <person name="Gabel C."/>
            <person name="Fuchs M."/>
            <person name="Fartmann B."/>
            <person name="Granderath K."/>
            <person name="Dauner D."/>
            <person name="Herzl A."/>
            <person name="Neumann S."/>
            <person name="Argiriou A."/>
            <person name="Vitale D."/>
            <person name="Liguori R."/>
            <person name="Piravandi E."/>
            <person name="Massenet O."/>
            <person name="Quigley F."/>
            <person name="Clabauld G."/>
            <person name="Muendlein A."/>
            <person name="Felber R."/>
            <person name="Schnabl S."/>
            <person name="Hiller R."/>
            <person name="Schmidt W."/>
            <person name="Lecharny A."/>
            <person name="Aubourg S."/>
            <person name="Chefdor F."/>
            <person name="Cooke R."/>
            <person name="Berger C."/>
            <person name="Monfort A."/>
            <person name="Casacuberta E."/>
            <person name="Gibbons T."/>
            <person name="Weber N."/>
            <person name="Vandenbol M."/>
            <person name="Bargues M."/>
            <person name="Terol J."/>
            <person name="Torres A."/>
            <person name="Perez-Perez A."/>
            <person name="Purnelle B."/>
            <person name="Bent E."/>
            <person name="Johnson S."/>
            <person name="Tacon D."/>
            <person name="Jesse T."/>
            <person name="Heijnen L."/>
            <person name="Schwarz S."/>
            <person name="Scholler P."/>
            <person name="Heber S."/>
            <person name="Francs P."/>
            <person name="Bielke C."/>
            <person name="Frishman D."/>
            <person name="Haase D."/>
            <person name="Lemcke K."/>
            <person name="Mewes H.-W."/>
            <person name="Stocker S."/>
            <person name="Zaccaria P."/>
            <person name="Bevan M."/>
            <person name="Wilson R.K."/>
            <person name="de la Bastide M."/>
            <person name="Habermann K."/>
            <person name="Parnell L."/>
            <person name="Dedhia N."/>
            <person name="Gnoj L."/>
            <person name="Schutz K."/>
            <person name="Huang E."/>
            <person name="Spiegel L."/>
            <person name="Sekhon M."/>
            <person name="Murray J."/>
            <person name="Sheet P."/>
            <person name="Cordes M."/>
            <person name="Abu-Threideh J."/>
            <person name="Stoneking T."/>
            <person name="Kalicki J."/>
            <person name="Graves T."/>
            <person name="Harmon G."/>
            <person name="Edwards J."/>
            <person name="Latreille P."/>
            <person name="Courtney L."/>
            <person name="Cloud J."/>
            <person name="Abbott A."/>
            <person name="Scott K."/>
            <person name="Johnson D."/>
            <person name="Minx P."/>
            <person name="Bentley D."/>
            <person name="Fulton B."/>
            <person name="Miller N."/>
            <person name="Greco T."/>
            <person name="Kemp K."/>
            <person name="Kramer J."/>
            <person name="Fulton L."/>
            <person name="Mardis E."/>
            <person name="Dante M."/>
            <person name="Pepin K."/>
            <person name="Hillier L.W."/>
            <person name="Nelson J."/>
            <person name="Spieth J."/>
            <person name="Ryan E."/>
            <person name="Andrews S."/>
            <person name="Geisel C."/>
            <person name="Layman D."/>
            <person name="Du H."/>
            <person name="Ali J."/>
            <person name="Berghoff A."/>
            <person name="Jones K."/>
            <person name="Drone K."/>
            <person name="Cotton M."/>
            <person name="Joshu C."/>
            <person name="Antonoiu B."/>
            <person name="Zidanic M."/>
            <person name="Strong C."/>
            <person name="Sun H."/>
            <person name="Lamar B."/>
            <person name="Yordan C."/>
            <person name="Ma P."/>
            <person name="Zhong J."/>
            <person name="Preston R."/>
            <person name="Vil D."/>
            <person name="Shekher M."/>
            <person name="Matero A."/>
            <person name="Shah R."/>
            <person name="Swaby I.K."/>
            <person name="O'Shaughnessy A."/>
            <person name="Rodriguez M."/>
            <person name="Hoffman J."/>
            <person name="Till S."/>
            <person name="Granat S."/>
            <person name="Shohdy N."/>
            <person name="Hasegawa A."/>
            <person name="Hameed A."/>
            <person name="Lodhi M."/>
            <person name="Johnson A."/>
            <person name="Chen E."/>
            <person name="Marra M.A."/>
            <person name="Martienssen R."/>
            <person name="McCombie W.R."/>
        </authorList>
    </citation>
    <scope>NUCLEOTIDE SEQUENCE [LARGE SCALE GENOMIC DNA]</scope>
    <source>
        <strain>cv. Columbia</strain>
    </source>
</reference>
<reference key="2">
    <citation type="journal article" date="2017" name="Plant J.">
        <title>Araport11: a complete reannotation of the Arabidopsis thaliana reference genome.</title>
        <authorList>
            <person name="Cheng C.Y."/>
            <person name="Krishnakumar V."/>
            <person name="Chan A.P."/>
            <person name="Thibaud-Nissen F."/>
            <person name="Schobel S."/>
            <person name="Town C.D."/>
        </authorList>
    </citation>
    <scope>GENOME REANNOTATION</scope>
    <source>
        <strain>cv. Columbia</strain>
    </source>
</reference>
<reference key="3">
    <citation type="submission" date="2004-04" db="EMBL/GenBank/DDBJ databases">
        <title>Arabidopsis ORF clones.</title>
        <authorList>
            <person name="Shinn P."/>
            <person name="Chen H."/>
            <person name="Cheuk R.F."/>
            <person name="Kim C.J."/>
            <person name="Carninci P."/>
            <person name="Hayashizaki Y."/>
            <person name="Ishida J."/>
            <person name="Kamiya A."/>
            <person name="Kawai J."/>
            <person name="Narusaka M."/>
            <person name="Sakurai T."/>
            <person name="Satou M."/>
            <person name="Seki M."/>
            <person name="Shinozaki K."/>
            <person name="Ecker J.R."/>
        </authorList>
    </citation>
    <scope>NUCLEOTIDE SEQUENCE [LARGE SCALE MRNA]</scope>
    <source>
        <strain>cv. Columbia</strain>
    </source>
</reference>
<reference key="4">
    <citation type="submission" date="2006-07" db="EMBL/GenBank/DDBJ databases">
        <title>Large-scale analysis of RIKEN Arabidopsis full-length (RAFL) cDNAs.</title>
        <authorList>
            <person name="Totoki Y."/>
            <person name="Seki M."/>
            <person name="Ishida J."/>
            <person name="Nakajima M."/>
            <person name="Enju A."/>
            <person name="Kamiya A."/>
            <person name="Narusaka M."/>
            <person name="Shin-i T."/>
            <person name="Nakagawa M."/>
            <person name="Sakamoto N."/>
            <person name="Oishi K."/>
            <person name="Kohara Y."/>
            <person name="Kobayashi M."/>
            <person name="Toyoda A."/>
            <person name="Sakaki Y."/>
            <person name="Sakurai T."/>
            <person name="Iida K."/>
            <person name="Akiyama K."/>
            <person name="Satou M."/>
            <person name="Toyoda T."/>
            <person name="Konagaya A."/>
            <person name="Carninci P."/>
            <person name="Kawai J."/>
            <person name="Hayashizaki Y."/>
            <person name="Shinozaki K."/>
        </authorList>
    </citation>
    <scope>NUCLEOTIDE SEQUENCE [LARGE SCALE MRNA]</scope>
    <source>
        <strain>cv. Columbia</strain>
    </source>
</reference>
<reference key="5">
    <citation type="journal article" date="2010" name="Plant Physiol.">
        <title>SEUSS and SEUSS-LIKE transcriptional adaptors regulate floral and embryonic development in Arabidopsis.</title>
        <authorList>
            <person name="Bao F."/>
            <person name="Azhakanandam S."/>
            <person name="Franks R.G."/>
        </authorList>
    </citation>
    <scope>FUNCTION</scope>
    <scope>TISSUE SPECIFICITY</scope>
    <scope>DISRUPTION PHENOTYPE</scope>
</reference>
<reference key="6">
    <citation type="journal article" date="2014" name="BMC Plant Biol.">
        <title>Involvement of co-repressor LUH and the adapter proteins SLK1 and SLK2 in the regulation of abiotic stress response genes in Arabidopsis.</title>
        <authorList>
            <person name="Shrestha B."/>
            <person name="Guragain B."/>
            <person name="Sridhar V.V."/>
        </authorList>
    </citation>
    <scope>FUNCTION IN ABIOTIC STRESSES</scope>
    <scope>DISRUPTION PHENOTYPE</scope>
    <scope>INTERACTION WITH LUH</scope>
</reference>
<name>SLK1_ARATH</name>
<gene>
    <name type="primary">SLK1</name>
    <name type="ordered locus">At4g25520</name>
    <name type="ORF">M7J2.110</name>
</gene>
<proteinExistence type="evidence at protein level"/>
<dbReference type="EMBL" id="AL022197">
    <property type="protein sequence ID" value="CAA18174.1"/>
    <property type="molecule type" value="Genomic_DNA"/>
</dbReference>
<dbReference type="EMBL" id="AL161563">
    <property type="protein sequence ID" value="CAB81362.1"/>
    <property type="molecule type" value="Genomic_DNA"/>
</dbReference>
<dbReference type="EMBL" id="CP002687">
    <property type="protein sequence ID" value="AEE85073.1"/>
    <property type="molecule type" value="Genomic_DNA"/>
</dbReference>
<dbReference type="EMBL" id="CP002687">
    <property type="protein sequence ID" value="ANM67173.1"/>
    <property type="molecule type" value="Genomic_DNA"/>
</dbReference>
<dbReference type="EMBL" id="BT012580">
    <property type="protein sequence ID" value="AAS99724.1"/>
    <property type="molecule type" value="mRNA"/>
</dbReference>
<dbReference type="EMBL" id="AK226715">
    <property type="protein sequence ID" value="BAE98821.1"/>
    <property type="molecule type" value="mRNA"/>
</dbReference>
<dbReference type="PIR" id="H85294">
    <property type="entry name" value="H85294"/>
</dbReference>
<dbReference type="PIR" id="T05795">
    <property type="entry name" value="T05795"/>
</dbReference>
<dbReference type="RefSeq" id="NP_001320064.1">
    <property type="nucleotide sequence ID" value="NM_001341749.1"/>
</dbReference>
<dbReference type="RefSeq" id="NP_194282.2">
    <property type="nucleotide sequence ID" value="NM_118684.9"/>
</dbReference>
<dbReference type="BioGRID" id="13944">
    <property type="interactions" value="1"/>
</dbReference>
<dbReference type="FunCoup" id="Q0WVM7">
    <property type="interactions" value="299"/>
</dbReference>
<dbReference type="STRING" id="3702.Q0WVM7"/>
<dbReference type="GlyGen" id="Q0WVM7">
    <property type="glycosylation" value="2 sites, 1 O-linked glycan (2 sites)"/>
</dbReference>
<dbReference type="iPTMnet" id="Q0WVM7"/>
<dbReference type="PaxDb" id="3702-AT4G25520.1"/>
<dbReference type="ProteomicsDB" id="228440"/>
<dbReference type="EnsemblPlants" id="AT4G25520.1">
    <property type="protein sequence ID" value="AT4G25520.1"/>
    <property type="gene ID" value="AT4G25520"/>
</dbReference>
<dbReference type="EnsemblPlants" id="AT4G25520.2">
    <property type="protein sequence ID" value="AT4G25520.2"/>
    <property type="gene ID" value="AT4G25520"/>
</dbReference>
<dbReference type="GeneID" id="828657"/>
<dbReference type="Gramene" id="AT4G25520.1">
    <property type="protein sequence ID" value="AT4G25520.1"/>
    <property type="gene ID" value="AT4G25520"/>
</dbReference>
<dbReference type="Gramene" id="AT4G25520.2">
    <property type="protein sequence ID" value="AT4G25520.2"/>
    <property type="gene ID" value="AT4G25520"/>
</dbReference>
<dbReference type="KEGG" id="ath:AT4G25520"/>
<dbReference type="Araport" id="AT4G25520"/>
<dbReference type="TAIR" id="AT4G25520">
    <property type="gene designation" value="SLK1"/>
</dbReference>
<dbReference type="eggNOG" id="ENOG502SZ3H">
    <property type="taxonomic scope" value="Eukaryota"/>
</dbReference>
<dbReference type="HOGENOM" id="CLU_007007_1_0_1"/>
<dbReference type="InParanoid" id="Q0WVM7"/>
<dbReference type="OMA" id="GINNNMR"/>
<dbReference type="OrthoDB" id="774557at2759"/>
<dbReference type="PhylomeDB" id="Q0WVM7"/>
<dbReference type="PRO" id="PR:Q0WVM7"/>
<dbReference type="Proteomes" id="UP000006548">
    <property type="component" value="Chromosome 4"/>
</dbReference>
<dbReference type="ExpressionAtlas" id="Q0WVM7">
    <property type="expression patterns" value="baseline and differential"/>
</dbReference>
<dbReference type="GO" id="GO:0005634">
    <property type="term" value="C:nucleus"/>
    <property type="evidence" value="ECO:0007669"/>
    <property type="project" value="UniProtKB-SubCell"/>
</dbReference>
<dbReference type="GO" id="GO:0030154">
    <property type="term" value="P:cell differentiation"/>
    <property type="evidence" value="ECO:0007669"/>
    <property type="project" value="UniProtKB-KW"/>
</dbReference>
<dbReference type="GO" id="GO:0009793">
    <property type="term" value="P:embryo development ending in seed dormancy"/>
    <property type="evidence" value="ECO:0000315"/>
    <property type="project" value="TAIR"/>
</dbReference>
<dbReference type="GO" id="GO:0048467">
    <property type="term" value="P:gynoecium development"/>
    <property type="evidence" value="ECO:0000315"/>
    <property type="project" value="TAIR"/>
</dbReference>
<dbReference type="GO" id="GO:1901001">
    <property type="term" value="P:negative regulation of response to salt stress"/>
    <property type="evidence" value="ECO:0000315"/>
    <property type="project" value="UniProtKB"/>
</dbReference>
<dbReference type="GO" id="GO:0048481">
    <property type="term" value="P:plant ovule development"/>
    <property type="evidence" value="ECO:0000315"/>
    <property type="project" value="TAIR"/>
</dbReference>
<dbReference type="GO" id="GO:0047484">
    <property type="term" value="P:regulation of response to osmotic stress"/>
    <property type="evidence" value="ECO:0000315"/>
    <property type="project" value="UniProtKB"/>
</dbReference>
<dbReference type="InterPro" id="IPR029005">
    <property type="entry name" value="LIM-bd/SEUSS"/>
</dbReference>
<dbReference type="PANTHER" id="PTHR10378">
    <property type="entry name" value="LIM DOMAIN-BINDING PROTEIN"/>
    <property type="match status" value="1"/>
</dbReference>
<dbReference type="Pfam" id="PF01803">
    <property type="entry name" value="LIM_bind"/>
    <property type="match status" value="1"/>
</dbReference>
<comment type="function">
    <text evidence="4 5">Probable transcription regulator that functions in the development of the carpel margin meristem similarly to SEUSS (SEU). In association with SEU, supports organ development from meristematic regions by facilitating auxin response and thus organ initiation, and by sustaining meristematic potential through the maintenance of PHABULOSA expression (PubMed:20007451). DNA-binding adapter subunit of the SEU-SLK1 transcriptional corepressor of abiotic stress (e.g. salt and osmotic stress) response genes (PubMed:24564815).</text>
</comment>
<comment type="subunit">
    <text evidence="5">Forms corepressor complexes with LUH; LUH is the transcription repressor subunit and SLK1 the specific DNA-binding adapters.</text>
</comment>
<comment type="subcellular location">
    <subcellularLocation>
        <location evidence="1">Nucleus</location>
    </subcellularLocation>
</comment>
<comment type="tissue specificity">
    <text evidence="4">Expressed in young flower meristems, ovules and the carpel margin meristem.</text>
</comment>
<comment type="disruption phenotype">
    <text evidence="4 5">No visible phenotype under normal growth conditions, but the double mutants seu and slk1 are short in stature, sterile and display strong disruptions of floral development and high frequency of female gametophyte disruption (PubMed:20007451). Enhanced tolerance to salt and osmotic stress conditions (PubMed:24564815).</text>
</comment>
<comment type="similarity">
    <text evidence="6">Belongs to the adn1/SEU family.</text>
</comment>
<evidence type="ECO:0000250" key="1"/>
<evidence type="ECO:0000255" key="2"/>
<evidence type="ECO:0000256" key="3">
    <source>
        <dbReference type="SAM" id="MobiDB-lite"/>
    </source>
</evidence>
<evidence type="ECO:0000269" key="4">
    <source>
    </source>
</evidence>
<evidence type="ECO:0000269" key="5">
    <source>
    </source>
</evidence>
<evidence type="ECO:0000305" key="6"/>
<organism>
    <name type="scientific">Arabidopsis thaliana</name>
    <name type="common">Mouse-ear cress</name>
    <dbReference type="NCBI Taxonomy" id="3702"/>
    <lineage>
        <taxon>Eukaryota</taxon>
        <taxon>Viridiplantae</taxon>
        <taxon>Streptophyta</taxon>
        <taxon>Embryophyta</taxon>
        <taxon>Tracheophyta</taxon>
        <taxon>Spermatophyta</taxon>
        <taxon>Magnoliopsida</taxon>
        <taxon>eudicotyledons</taxon>
        <taxon>Gunneridae</taxon>
        <taxon>Pentapetalae</taxon>
        <taxon>rosids</taxon>
        <taxon>malvids</taxon>
        <taxon>Brassicales</taxon>
        <taxon>Brassicaceae</taxon>
        <taxon>Camelineae</taxon>
        <taxon>Arabidopsis</taxon>
    </lineage>
</organism>
<protein>
    <recommendedName>
        <fullName>Probable transcriptional regulator SLK1</fullName>
        <shortName>AtSLK1</shortName>
    </recommendedName>
    <alternativeName>
        <fullName>Protein SEUSS-like 1</fullName>
    </alternativeName>
</protein>
<sequence>MNRTVVSGAVESSFSLTDAVGTEALNMQRSSGINNNMRIPTSPMSFSSNSVNIPGSLVLDGSAASMQHLPQQQQQQLLQQQTGQGSVPMRENNYSHVDKKPRLEVKQEDMLQQQILQQLIQRQDPTGRNPQMQALLQQQRLRQHQQMLQSMSPSQRLQLQQQQQLRQQLQQQGTQQIPPNVRPYEVGVCARKLMMYLYHLQQRPAENCITYWRKFVAEYFSPRAKQRLCLSQYESAGHHALGMFPQAAPDMWQCDLCGTKSGKGFEATFDVLARLIEIKFASGIIDELLYLDHPRENRFPNGLMMLEYRKAVQETVHEQFRVVREGHLRIIFSQDLKILSWEFCARRHEELLLRRLIAPQVNQLLQVAQKCQSTISESGSEGVSQQDLQSNSNMVLGAGRQLAKFMELQSLNDLGYPKRYIRTLQISEVVKSMKDLMNFTGEQKIGPIEGLKRLLEQTVTVKLQKQKMQEMEQFGNNGAINGPVQAQMVLTSGTMNGSTGNNTNNHHQIVGRGAMSGPAEGQMVISSGTVSGATANNNSNNHNQIVGRGAMNGSAQAAAALTNYQSMLMRQNAMNNPNSNTGKQEGFSSQNPTPNSNQSPSSSSQQRHNLVTGGFPNSPQMQQQQRTMNGPTNILPQNHPHQLQSPHSHGNTPEQQMLHQLLQEMSENGGSVQQQQAFSGQSGSNSNAERNTTASTSNISGGGRAPSRNNSFKAASNNNLHFSEDISITDHDFSEDGFFNNNDIYGGL</sequence>
<keyword id="KW-0217">Developmental protein</keyword>
<keyword id="KW-0221">Differentiation</keyword>
<keyword id="KW-0287">Flowering</keyword>
<keyword id="KW-0539">Nucleus</keyword>
<keyword id="KW-1185">Reference proteome</keyword>
<keyword id="KW-0804">Transcription</keyword>
<keyword id="KW-0805">Transcription regulation</keyword>